<accession>B8DRQ6</accession>
<protein>
    <recommendedName>
        <fullName evidence="1">tRNA pseudouridine synthase A</fullName>
        <ecNumber evidence="1">5.4.99.12</ecNumber>
    </recommendedName>
    <alternativeName>
        <fullName evidence="1">tRNA pseudouridine(38-40) synthase</fullName>
    </alternativeName>
    <alternativeName>
        <fullName evidence="1">tRNA pseudouridylate synthase I</fullName>
    </alternativeName>
    <alternativeName>
        <fullName evidence="1">tRNA-uridine isomerase I</fullName>
    </alternativeName>
</protein>
<comment type="function">
    <text evidence="1">Formation of pseudouridine at positions 38, 39 and 40 in the anticodon stem and loop of transfer RNAs.</text>
</comment>
<comment type="catalytic activity">
    <reaction evidence="1">
        <text>uridine(38/39/40) in tRNA = pseudouridine(38/39/40) in tRNA</text>
        <dbReference type="Rhea" id="RHEA:22376"/>
        <dbReference type="Rhea" id="RHEA-COMP:10085"/>
        <dbReference type="Rhea" id="RHEA-COMP:10087"/>
        <dbReference type="ChEBI" id="CHEBI:65314"/>
        <dbReference type="ChEBI" id="CHEBI:65315"/>
        <dbReference type="EC" id="5.4.99.12"/>
    </reaction>
</comment>
<comment type="subunit">
    <text evidence="1">Homodimer.</text>
</comment>
<comment type="similarity">
    <text evidence="1">Belongs to the tRNA pseudouridine synthase TruA family.</text>
</comment>
<evidence type="ECO:0000255" key="1">
    <source>
        <dbReference type="HAMAP-Rule" id="MF_00171"/>
    </source>
</evidence>
<gene>
    <name evidence="1" type="primary">truA</name>
    <name type="ordered locus">DvMF_1395</name>
</gene>
<dbReference type="EC" id="5.4.99.12" evidence="1"/>
<dbReference type="EMBL" id="CP001197">
    <property type="protein sequence ID" value="ACL08343.1"/>
    <property type="molecule type" value="Genomic_DNA"/>
</dbReference>
<dbReference type="SMR" id="B8DRQ6"/>
<dbReference type="STRING" id="883.DvMF_1395"/>
<dbReference type="KEGG" id="dvm:DvMF_1395"/>
<dbReference type="eggNOG" id="COG0101">
    <property type="taxonomic scope" value="Bacteria"/>
</dbReference>
<dbReference type="HOGENOM" id="CLU_014673_0_2_7"/>
<dbReference type="OrthoDB" id="9811823at2"/>
<dbReference type="GO" id="GO:0003723">
    <property type="term" value="F:RNA binding"/>
    <property type="evidence" value="ECO:0007669"/>
    <property type="project" value="InterPro"/>
</dbReference>
<dbReference type="GO" id="GO:0160147">
    <property type="term" value="F:tRNA pseudouridine(38-40) synthase activity"/>
    <property type="evidence" value="ECO:0007669"/>
    <property type="project" value="UniProtKB-EC"/>
</dbReference>
<dbReference type="GO" id="GO:0031119">
    <property type="term" value="P:tRNA pseudouridine synthesis"/>
    <property type="evidence" value="ECO:0007669"/>
    <property type="project" value="UniProtKB-UniRule"/>
</dbReference>
<dbReference type="CDD" id="cd02570">
    <property type="entry name" value="PseudoU_synth_EcTruA"/>
    <property type="match status" value="1"/>
</dbReference>
<dbReference type="FunFam" id="3.30.70.580:FF:000001">
    <property type="entry name" value="tRNA pseudouridine synthase A"/>
    <property type="match status" value="1"/>
</dbReference>
<dbReference type="Gene3D" id="3.30.70.660">
    <property type="entry name" value="Pseudouridine synthase I, catalytic domain, C-terminal subdomain"/>
    <property type="match status" value="1"/>
</dbReference>
<dbReference type="Gene3D" id="3.30.70.580">
    <property type="entry name" value="Pseudouridine synthase I, catalytic domain, N-terminal subdomain"/>
    <property type="match status" value="1"/>
</dbReference>
<dbReference type="HAMAP" id="MF_00171">
    <property type="entry name" value="TruA"/>
    <property type="match status" value="1"/>
</dbReference>
<dbReference type="InterPro" id="IPR020103">
    <property type="entry name" value="PsdUridine_synth_cat_dom_sf"/>
</dbReference>
<dbReference type="InterPro" id="IPR001406">
    <property type="entry name" value="PsdUridine_synth_TruA"/>
</dbReference>
<dbReference type="InterPro" id="IPR020097">
    <property type="entry name" value="PsdUridine_synth_TruA_a/b_dom"/>
</dbReference>
<dbReference type="InterPro" id="IPR020095">
    <property type="entry name" value="PsdUridine_synth_TruA_C"/>
</dbReference>
<dbReference type="InterPro" id="IPR020094">
    <property type="entry name" value="TruA/RsuA/RluB/E/F_N"/>
</dbReference>
<dbReference type="PANTHER" id="PTHR11142">
    <property type="entry name" value="PSEUDOURIDYLATE SYNTHASE"/>
    <property type="match status" value="1"/>
</dbReference>
<dbReference type="PANTHER" id="PTHR11142:SF0">
    <property type="entry name" value="TRNA PSEUDOURIDINE SYNTHASE-LIKE 1"/>
    <property type="match status" value="1"/>
</dbReference>
<dbReference type="Pfam" id="PF01416">
    <property type="entry name" value="PseudoU_synth_1"/>
    <property type="match status" value="2"/>
</dbReference>
<dbReference type="PIRSF" id="PIRSF001430">
    <property type="entry name" value="tRNA_psdUrid_synth"/>
    <property type="match status" value="1"/>
</dbReference>
<dbReference type="SUPFAM" id="SSF55120">
    <property type="entry name" value="Pseudouridine synthase"/>
    <property type="match status" value="1"/>
</dbReference>
<sequence length="277" mass="30244">MARLALTVSYVGTRLAGWQIQARTDRPQPRTVQGELERIAERIVGAPVRLHGAGRTDSGVHAEAQVAHMDVPDHRADLDWQRAFNAGLPDDISVAAVVRVPDEFHARFDARGKTYTYRLWPERRWVPPRLAPFAWATGQLDMDAMDAAAAYLHGMHDFASFQNTGTDIVTTVRTVTRVARRHEGEAPVQPALPGAQPLAGAEETANAMAGGLRVMAWDFEADGFLKQMVRNMMGLLVAVGRGKLPPDAVPAILAARDRKTAPATAPAHGLTLTRVHY</sequence>
<organism>
    <name type="scientific">Nitratidesulfovibrio vulgaris (strain DSM 19637 / Miyazaki F)</name>
    <name type="common">Desulfovibrio vulgaris</name>
    <dbReference type="NCBI Taxonomy" id="883"/>
    <lineage>
        <taxon>Bacteria</taxon>
        <taxon>Pseudomonadati</taxon>
        <taxon>Thermodesulfobacteriota</taxon>
        <taxon>Desulfovibrionia</taxon>
        <taxon>Desulfovibrionales</taxon>
        <taxon>Desulfovibrionaceae</taxon>
        <taxon>Nitratidesulfovibrio</taxon>
    </lineage>
</organism>
<name>TRUA_NITV9</name>
<feature type="chain" id="PRO_1000194546" description="tRNA pseudouridine synthase A">
    <location>
        <begin position="1"/>
        <end position="277"/>
    </location>
</feature>
<feature type="active site" description="Nucleophile" evidence="1">
    <location>
        <position position="57"/>
    </location>
</feature>
<feature type="binding site" evidence="1">
    <location>
        <position position="115"/>
    </location>
    <ligand>
        <name>substrate</name>
    </ligand>
</feature>
<keyword id="KW-0413">Isomerase</keyword>
<keyword id="KW-0819">tRNA processing</keyword>
<reference key="1">
    <citation type="submission" date="2008-10" db="EMBL/GenBank/DDBJ databases">
        <title>Complete sequence of Desulfovibrio vulgaris str. 'Miyazaki F'.</title>
        <authorList>
            <person name="Lucas S."/>
            <person name="Copeland A."/>
            <person name="Lapidus A."/>
            <person name="Glavina del Rio T."/>
            <person name="Dalin E."/>
            <person name="Tice H."/>
            <person name="Bruce D."/>
            <person name="Goodwin L."/>
            <person name="Pitluck S."/>
            <person name="Sims D."/>
            <person name="Brettin T."/>
            <person name="Detter J.C."/>
            <person name="Han C."/>
            <person name="Larimer F."/>
            <person name="Land M."/>
            <person name="Hauser L."/>
            <person name="Kyrpides N."/>
            <person name="Mikhailova N."/>
            <person name="Hazen T.C."/>
            <person name="Richardson P."/>
        </authorList>
    </citation>
    <scope>NUCLEOTIDE SEQUENCE [LARGE SCALE GENOMIC DNA]</scope>
    <source>
        <strain>DSM 19637 / Miyazaki F</strain>
    </source>
</reference>
<proteinExistence type="inferred from homology"/>